<protein>
    <recommendedName>
        <fullName>Malate dehydrogenase, mitochondrial</fullName>
        <ecNumber>1.1.1.37</ecNumber>
    </recommendedName>
</protein>
<name>MDHM_SCHMA</name>
<evidence type="ECO:0000250" key="1"/>
<evidence type="ECO:0000255" key="2">
    <source>
        <dbReference type="PROSITE-ProRule" id="PRU10004"/>
    </source>
</evidence>
<evidence type="ECO:0000305" key="3"/>
<reference key="1">
    <citation type="journal article" date="1993" name="Mol. Biochem. Parasitol.">
        <title>Expression of Schistosoma mansoni genes involved in anaerobic and oxidative glucose metabolism during the cercaria to adult transformation.</title>
        <authorList>
            <person name="Skelly P.J."/>
            <person name="Stein L.D."/>
            <person name="Shoemaker C.B."/>
        </authorList>
    </citation>
    <scope>NUCLEOTIDE SEQUENCE [GENOMIC DNA]</scope>
</reference>
<keyword id="KW-0496">Mitochondrion</keyword>
<keyword id="KW-0520">NAD</keyword>
<keyword id="KW-0560">Oxidoreductase</keyword>
<keyword id="KW-1185">Reference proteome</keyword>
<keyword id="KW-0816">Tricarboxylic acid cycle</keyword>
<accession>P37227</accession>
<proteinExistence type="evidence at transcript level"/>
<sequence length="142" mass="14956">ASGGIGEPLSLLLKQSPLISQLALYDIAHVKGVAADLSHIETQAHVTAHLGPGELAECLTGANVVIIPAGLPRKPGMTRDDLFNTNASIVAELIDSCAKNCPKAMICIITNPVNSTVPIAAEILKRHNVYDPKRLFGVTTLD</sequence>
<comment type="catalytic activity">
    <reaction evidence="2">
        <text>(S)-malate + NAD(+) = oxaloacetate + NADH + H(+)</text>
        <dbReference type="Rhea" id="RHEA:21432"/>
        <dbReference type="ChEBI" id="CHEBI:15378"/>
        <dbReference type="ChEBI" id="CHEBI:15589"/>
        <dbReference type="ChEBI" id="CHEBI:16452"/>
        <dbReference type="ChEBI" id="CHEBI:57540"/>
        <dbReference type="ChEBI" id="CHEBI:57945"/>
        <dbReference type="EC" id="1.1.1.37"/>
    </reaction>
</comment>
<comment type="subunit">
    <text evidence="1">Homodimer.</text>
</comment>
<comment type="subcellular location">
    <subcellularLocation>
        <location>Mitochondrion matrix</location>
    </subcellularLocation>
</comment>
<comment type="developmental stage">
    <text>Expressed in relatively high level in adults as compared to larval worms.</text>
</comment>
<comment type="similarity">
    <text evidence="3">Belongs to the LDH/MDH superfamily. MDH type 1 family.</text>
</comment>
<organism>
    <name type="scientific">Schistosoma mansoni</name>
    <name type="common">Blood fluke</name>
    <dbReference type="NCBI Taxonomy" id="6183"/>
    <lineage>
        <taxon>Eukaryota</taxon>
        <taxon>Metazoa</taxon>
        <taxon>Spiralia</taxon>
        <taxon>Lophotrochozoa</taxon>
        <taxon>Platyhelminthes</taxon>
        <taxon>Trematoda</taxon>
        <taxon>Digenea</taxon>
        <taxon>Strigeidida</taxon>
        <taxon>Schistosomatoidea</taxon>
        <taxon>Schistosomatidae</taxon>
        <taxon>Schistosoma</taxon>
    </lineage>
</organism>
<feature type="chain" id="PRO_0000113340" description="Malate dehydrogenase, mitochondrial">
    <location>
        <begin position="1" status="less than"/>
        <end position="142" status="greater than"/>
    </location>
</feature>
<feature type="binding site" evidence="1">
    <location>
        <begin position="1"/>
        <end position="6"/>
    </location>
    <ligand>
        <name>NAD(+)</name>
        <dbReference type="ChEBI" id="CHEBI:57540"/>
    </ligand>
</feature>
<feature type="binding site" evidence="1">
    <location>
        <position position="26"/>
    </location>
    <ligand>
        <name>NAD(+)</name>
        <dbReference type="ChEBI" id="CHEBI:57540"/>
    </ligand>
</feature>
<feature type="binding site" evidence="2">
    <location>
        <position position="73"/>
    </location>
    <ligand>
        <name>substrate</name>
    </ligand>
</feature>
<feature type="binding site" evidence="2">
    <location>
        <position position="79"/>
    </location>
    <ligand>
        <name>substrate</name>
    </ligand>
</feature>
<feature type="binding site" evidence="1">
    <location>
        <position position="86"/>
    </location>
    <ligand>
        <name>NAD(+)</name>
        <dbReference type="ChEBI" id="CHEBI:57540"/>
    </ligand>
</feature>
<feature type="binding site" evidence="1">
    <location>
        <begin position="109"/>
        <end position="111"/>
    </location>
    <ligand>
        <name>NAD(+)</name>
        <dbReference type="ChEBI" id="CHEBI:57540"/>
    </ligand>
</feature>
<feature type="binding site" evidence="2">
    <location>
        <position position="111"/>
    </location>
    <ligand>
        <name>substrate</name>
    </ligand>
</feature>
<feature type="non-terminal residue">
    <location>
        <position position="1"/>
    </location>
</feature>
<feature type="non-terminal residue">
    <location>
        <position position="142"/>
    </location>
</feature>
<dbReference type="EC" id="1.1.1.37"/>
<dbReference type="EMBL" id="L10108">
    <property type="protein sequence ID" value="AAA29901.1"/>
    <property type="molecule type" value="Genomic_DNA"/>
</dbReference>
<dbReference type="SMR" id="P37227"/>
<dbReference type="STRING" id="6183.P37227"/>
<dbReference type="eggNOG" id="KOG1494">
    <property type="taxonomic scope" value="Eukaryota"/>
</dbReference>
<dbReference type="HOGENOM" id="CLU_047181_0_1_1"/>
<dbReference type="InParanoid" id="P37227"/>
<dbReference type="SABIO-RK" id="P37227"/>
<dbReference type="Proteomes" id="UP000008854">
    <property type="component" value="Unassembled WGS sequence"/>
</dbReference>
<dbReference type="GO" id="GO:0005759">
    <property type="term" value="C:mitochondrial matrix"/>
    <property type="evidence" value="ECO:0007669"/>
    <property type="project" value="UniProtKB-SubCell"/>
</dbReference>
<dbReference type="GO" id="GO:0030060">
    <property type="term" value="F:L-malate dehydrogenase (NAD+) activity"/>
    <property type="evidence" value="ECO:0007669"/>
    <property type="project" value="UniProtKB-EC"/>
</dbReference>
<dbReference type="GO" id="GO:0006099">
    <property type="term" value="P:tricarboxylic acid cycle"/>
    <property type="evidence" value="ECO:0007669"/>
    <property type="project" value="UniProtKB-KW"/>
</dbReference>
<dbReference type="FunFam" id="3.40.50.720:FF:000013">
    <property type="entry name" value="Malate dehydrogenase"/>
    <property type="match status" value="1"/>
</dbReference>
<dbReference type="Gene3D" id="3.40.50.720">
    <property type="entry name" value="NAD(P)-binding Rossmann-like Domain"/>
    <property type="match status" value="1"/>
</dbReference>
<dbReference type="InterPro" id="IPR001236">
    <property type="entry name" value="Lactate/malate_DH_N"/>
</dbReference>
<dbReference type="InterPro" id="IPR036291">
    <property type="entry name" value="NAD(P)-bd_dom_sf"/>
</dbReference>
<dbReference type="PANTHER" id="PTHR11540">
    <property type="entry name" value="MALATE AND LACTATE DEHYDROGENASE"/>
    <property type="match status" value="1"/>
</dbReference>
<dbReference type="PANTHER" id="PTHR11540:SF16">
    <property type="entry name" value="MALATE DEHYDROGENASE, MITOCHONDRIAL"/>
    <property type="match status" value="1"/>
</dbReference>
<dbReference type="Pfam" id="PF00056">
    <property type="entry name" value="Ldh_1_N"/>
    <property type="match status" value="1"/>
</dbReference>
<dbReference type="SUPFAM" id="SSF51735">
    <property type="entry name" value="NAD(P)-binding Rossmann-fold domains"/>
    <property type="match status" value="1"/>
</dbReference>